<evidence type="ECO:0000255" key="1">
    <source>
        <dbReference type="HAMAP-Rule" id="MF_01356"/>
    </source>
</evidence>
<geneLocation type="chloroplast"/>
<comment type="function">
    <text evidence="1">NDH shuttles electrons from NAD(P)H:plastoquinone, via FMN and iron-sulfur (Fe-S) centers, to quinones in the photosynthetic chain and possibly in a chloroplast respiratory chain. The immediate electron acceptor for the enzyme in this species is believed to be plastoquinone. Couples the redox reaction to proton translocation, and thus conserves the redox energy in a proton gradient.</text>
</comment>
<comment type="catalytic activity">
    <reaction evidence="1">
        <text>a plastoquinone + NADH + (n+1) H(+)(in) = a plastoquinol + NAD(+) + n H(+)(out)</text>
        <dbReference type="Rhea" id="RHEA:42608"/>
        <dbReference type="Rhea" id="RHEA-COMP:9561"/>
        <dbReference type="Rhea" id="RHEA-COMP:9562"/>
        <dbReference type="ChEBI" id="CHEBI:15378"/>
        <dbReference type="ChEBI" id="CHEBI:17757"/>
        <dbReference type="ChEBI" id="CHEBI:57540"/>
        <dbReference type="ChEBI" id="CHEBI:57945"/>
        <dbReference type="ChEBI" id="CHEBI:62192"/>
    </reaction>
</comment>
<comment type="catalytic activity">
    <reaction evidence="1">
        <text>a plastoquinone + NADPH + (n+1) H(+)(in) = a plastoquinol + NADP(+) + n H(+)(out)</text>
        <dbReference type="Rhea" id="RHEA:42612"/>
        <dbReference type="Rhea" id="RHEA-COMP:9561"/>
        <dbReference type="Rhea" id="RHEA-COMP:9562"/>
        <dbReference type="ChEBI" id="CHEBI:15378"/>
        <dbReference type="ChEBI" id="CHEBI:17757"/>
        <dbReference type="ChEBI" id="CHEBI:57783"/>
        <dbReference type="ChEBI" id="CHEBI:58349"/>
        <dbReference type="ChEBI" id="CHEBI:62192"/>
    </reaction>
</comment>
<comment type="cofactor">
    <cofactor evidence="1">
        <name>[4Fe-4S] cluster</name>
        <dbReference type="ChEBI" id="CHEBI:49883"/>
    </cofactor>
    <text evidence="1">Binds 1 [4Fe-4S] cluster.</text>
</comment>
<comment type="subunit">
    <text evidence="1">NDH is composed of at least 16 different subunits, 5 of which are encoded in the nucleus.</text>
</comment>
<comment type="subcellular location">
    <subcellularLocation>
        <location evidence="1">Plastid</location>
        <location evidence="1">Chloroplast thylakoid membrane</location>
        <topology evidence="1">Peripheral membrane protein</topology>
        <orientation evidence="1">Stromal side</orientation>
    </subcellularLocation>
</comment>
<comment type="similarity">
    <text evidence="1">Belongs to the complex I 20 kDa subunit family.</text>
</comment>
<accession>A0A339</accession>
<gene>
    <name evidence="1" type="primary">ndhK</name>
</gene>
<feature type="chain" id="PRO_0000358534" description="NAD(P)H-quinone oxidoreductase subunit K, chloroplastic">
    <location>
        <begin position="1"/>
        <end position="229"/>
    </location>
</feature>
<feature type="binding site" evidence="1">
    <location>
        <position position="43"/>
    </location>
    <ligand>
        <name>[4Fe-4S] cluster</name>
        <dbReference type="ChEBI" id="CHEBI:49883"/>
    </ligand>
</feature>
<feature type="binding site" evidence="1">
    <location>
        <position position="44"/>
    </location>
    <ligand>
        <name>[4Fe-4S] cluster</name>
        <dbReference type="ChEBI" id="CHEBI:49883"/>
    </ligand>
</feature>
<feature type="binding site" evidence="1">
    <location>
        <position position="108"/>
    </location>
    <ligand>
        <name>[4Fe-4S] cluster</name>
        <dbReference type="ChEBI" id="CHEBI:49883"/>
    </ligand>
</feature>
<feature type="binding site" evidence="1">
    <location>
        <position position="139"/>
    </location>
    <ligand>
        <name>[4Fe-4S] cluster</name>
        <dbReference type="ChEBI" id="CHEBI:49883"/>
    </ligand>
</feature>
<sequence>MNSIELPLLDRTAQNSVISTTLNDFSNWSRLSSLWPLLYGTSCCFIEFASLIGSRFDFDRYGLVPRSSPRQADLILTAGTVTMKMAPSLVRLYEQMPEPKYVIAMGACTITGGMFSTDSYSTVRGVDKLIPVDVYLPGCPPKPEAVIDAITKLRKKISREIYEDRIRPQRQRSNRCFTTNHKFHISRSMNTGNYDQGFLYQPASTFTSEIPTETFFKYKSSVSSHELVN</sequence>
<keyword id="KW-0004">4Fe-4S</keyword>
<keyword id="KW-0150">Chloroplast</keyword>
<keyword id="KW-0408">Iron</keyword>
<keyword id="KW-0411">Iron-sulfur</keyword>
<keyword id="KW-0472">Membrane</keyword>
<keyword id="KW-0479">Metal-binding</keyword>
<keyword id="KW-0520">NAD</keyword>
<keyword id="KW-0521">NADP</keyword>
<keyword id="KW-0934">Plastid</keyword>
<keyword id="KW-0618">Plastoquinone</keyword>
<keyword id="KW-0874">Quinone</keyword>
<keyword id="KW-1185">Reference proteome</keyword>
<keyword id="KW-0793">Thylakoid</keyword>
<keyword id="KW-1278">Translocase</keyword>
<keyword id="KW-0813">Transport</keyword>
<name>NDHK_COFAR</name>
<proteinExistence type="inferred from homology"/>
<dbReference type="EC" id="7.1.1.-" evidence="1"/>
<dbReference type="EMBL" id="EF044213">
    <property type="protein sequence ID" value="ABJ89683.1"/>
    <property type="molecule type" value="Genomic_DNA"/>
</dbReference>
<dbReference type="RefSeq" id="YP_817486.1">
    <property type="nucleotide sequence ID" value="NC_008535.1"/>
</dbReference>
<dbReference type="SMR" id="A0A339"/>
<dbReference type="GeneID" id="4421833"/>
<dbReference type="OrthoDB" id="1889813at2759"/>
<dbReference type="Proteomes" id="UP000515148">
    <property type="component" value="Chloroplast Pltd"/>
</dbReference>
<dbReference type="GO" id="GO:0009535">
    <property type="term" value="C:chloroplast thylakoid membrane"/>
    <property type="evidence" value="ECO:0007669"/>
    <property type="project" value="UniProtKB-SubCell"/>
</dbReference>
<dbReference type="GO" id="GO:0045271">
    <property type="term" value="C:respiratory chain complex I"/>
    <property type="evidence" value="ECO:0007669"/>
    <property type="project" value="TreeGrafter"/>
</dbReference>
<dbReference type="GO" id="GO:0051539">
    <property type="term" value="F:4 iron, 4 sulfur cluster binding"/>
    <property type="evidence" value="ECO:0007669"/>
    <property type="project" value="UniProtKB-KW"/>
</dbReference>
<dbReference type="GO" id="GO:0005506">
    <property type="term" value="F:iron ion binding"/>
    <property type="evidence" value="ECO:0007669"/>
    <property type="project" value="UniProtKB-UniRule"/>
</dbReference>
<dbReference type="GO" id="GO:0008137">
    <property type="term" value="F:NADH dehydrogenase (ubiquinone) activity"/>
    <property type="evidence" value="ECO:0007669"/>
    <property type="project" value="InterPro"/>
</dbReference>
<dbReference type="GO" id="GO:0048038">
    <property type="term" value="F:quinone binding"/>
    <property type="evidence" value="ECO:0007669"/>
    <property type="project" value="UniProtKB-KW"/>
</dbReference>
<dbReference type="GO" id="GO:0009060">
    <property type="term" value="P:aerobic respiration"/>
    <property type="evidence" value="ECO:0007669"/>
    <property type="project" value="TreeGrafter"/>
</dbReference>
<dbReference type="GO" id="GO:0015990">
    <property type="term" value="P:electron transport coupled proton transport"/>
    <property type="evidence" value="ECO:0007669"/>
    <property type="project" value="TreeGrafter"/>
</dbReference>
<dbReference type="GO" id="GO:0019684">
    <property type="term" value="P:photosynthesis, light reaction"/>
    <property type="evidence" value="ECO:0007669"/>
    <property type="project" value="UniProtKB-UniRule"/>
</dbReference>
<dbReference type="FunFam" id="3.40.50.12280:FF:000003">
    <property type="entry name" value="NAD(P)H-quinone oxidoreductase subunit K, chloroplastic"/>
    <property type="match status" value="1"/>
</dbReference>
<dbReference type="Gene3D" id="3.40.50.12280">
    <property type="match status" value="1"/>
</dbReference>
<dbReference type="HAMAP" id="MF_01356">
    <property type="entry name" value="NDH1_NuoB"/>
    <property type="match status" value="1"/>
</dbReference>
<dbReference type="InterPro" id="IPR006137">
    <property type="entry name" value="NADH_UbQ_OxRdtase-like_20kDa"/>
</dbReference>
<dbReference type="InterPro" id="IPR006138">
    <property type="entry name" value="NADH_UQ_OxRdtase_20Kd_su"/>
</dbReference>
<dbReference type="NCBIfam" id="TIGR01957">
    <property type="entry name" value="nuoB_fam"/>
    <property type="match status" value="1"/>
</dbReference>
<dbReference type="NCBIfam" id="NF005012">
    <property type="entry name" value="PRK06411.1"/>
    <property type="match status" value="1"/>
</dbReference>
<dbReference type="PANTHER" id="PTHR11995">
    <property type="entry name" value="NADH DEHYDROGENASE"/>
    <property type="match status" value="1"/>
</dbReference>
<dbReference type="PANTHER" id="PTHR11995:SF14">
    <property type="entry name" value="NADH DEHYDROGENASE [UBIQUINONE] IRON-SULFUR PROTEIN 7, MITOCHONDRIAL"/>
    <property type="match status" value="1"/>
</dbReference>
<dbReference type="Pfam" id="PF01058">
    <property type="entry name" value="Oxidored_q6"/>
    <property type="match status" value="1"/>
</dbReference>
<dbReference type="SUPFAM" id="SSF56770">
    <property type="entry name" value="HydA/Nqo6-like"/>
    <property type="match status" value="1"/>
</dbReference>
<dbReference type="PROSITE" id="PS01150">
    <property type="entry name" value="COMPLEX1_20K"/>
    <property type="match status" value="1"/>
</dbReference>
<reference key="1">
    <citation type="journal article" date="2007" name="Plant Biotechnol. J.">
        <title>The complete nucleotide sequence of the coffee (Coffea arabica L.) chloroplast genome: organization and implications for biotechnology and phylogenetic relationships amongst angiosperms.</title>
        <authorList>
            <person name="Samson N."/>
            <person name="Bausher M.G."/>
            <person name="Lee S.-B."/>
            <person name="Jansen R.K."/>
            <person name="Daniell H."/>
        </authorList>
    </citation>
    <scope>NUCLEOTIDE SEQUENCE [LARGE SCALE GENOMIC DNA]</scope>
</reference>
<protein>
    <recommendedName>
        <fullName evidence="1">NAD(P)H-quinone oxidoreductase subunit K, chloroplastic</fullName>
        <ecNumber evidence="1">7.1.1.-</ecNumber>
    </recommendedName>
    <alternativeName>
        <fullName evidence="1">NAD(P)H dehydrogenase subunit K</fullName>
    </alternativeName>
    <alternativeName>
        <fullName evidence="1">NADH-plastoquinone oxidoreductase subunit K</fullName>
    </alternativeName>
</protein>
<organism>
    <name type="scientific">Coffea arabica</name>
    <name type="common">Arabian coffee</name>
    <dbReference type="NCBI Taxonomy" id="13443"/>
    <lineage>
        <taxon>Eukaryota</taxon>
        <taxon>Viridiplantae</taxon>
        <taxon>Streptophyta</taxon>
        <taxon>Embryophyta</taxon>
        <taxon>Tracheophyta</taxon>
        <taxon>Spermatophyta</taxon>
        <taxon>Magnoliopsida</taxon>
        <taxon>eudicotyledons</taxon>
        <taxon>Gunneridae</taxon>
        <taxon>Pentapetalae</taxon>
        <taxon>asterids</taxon>
        <taxon>lamiids</taxon>
        <taxon>Gentianales</taxon>
        <taxon>Rubiaceae</taxon>
        <taxon>Ixoroideae</taxon>
        <taxon>Gardenieae complex</taxon>
        <taxon>Bertiereae - Coffeeae clade</taxon>
        <taxon>Coffeeae</taxon>
        <taxon>Coffea</taxon>
    </lineage>
</organism>